<accession>Q8D3B9</accession>
<dbReference type="EMBL" id="BA000021">
    <property type="protein sequence ID" value="BAC24228.1"/>
    <property type="molecule type" value="Genomic_DNA"/>
</dbReference>
<dbReference type="SMR" id="Q8D3B9"/>
<dbReference type="STRING" id="36870.gene:10368560"/>
<dbReference type="KEGG" id="wbr:infC"/>
<dbReference type="eggNOG" id="COG0290">
    <property type="taxonomic scope" value="Bacteria"/>
</dbReference>
<dbReference type="HOGENOM" id="CLU_054919_3_2_6"/>
<dbReference type="Proteomes" id="UP000000562">
    <property type="component" value="Chromosome"/>
</dbReference>
<dbReference type="GO" id="GO:0005829">
    <property type="term" value="C:cytosol"/>
    <property type="evidence" value="ECO:0007669"/>
    <property type="project" value="TreeGrafter"/>
</dbReference>
<dbReference type="GO" id="GO:0016020">
    <property type="term" value="C:membrane"/>
    <property type="evidence" value="ECO:0007669"/>
    <property type="project" value="TreeGrafter"/>
</dbReference>
<dbReference type="GO" id="GO:0043022">
    <property type="term" value="F:ribosome binding"/>
    <property type="evidence" value="ECO:0007669"/>
    <property type="project" value="TreeGrafter"/>
</dbReference>
<dbReference type="GO" id="GO:0003743">
    <property type="term" value="F:translation initiation factor activity"/>
    <property type="evidence" value="ECO:0007669"/>
    <property type="project" value="UniProtKB-UniRule"/>
</dbReference>
<dbReference type="GO" id="GO:0032790">
    <property type="term" value="P:ribosome disassembly"/>
    <property type="evidence" value="ECO:0007669"/>
    <property type="project" value="TreeGrafter"/>
</dbReference>
<dbReference type="FunFam" id="3.10.20.80:FF:000001">
    <property type="entry name" value="Translation initiation factor IF-3"/>
    <property type="match status" value="1"/>
</dbReference>
<dbReference type="FunFam" id="3.30.110.10:FF:000001">
    <property type="entry name" value="Translation initiation factor IF-3"/>
    <property type="match status" value="1"/>
</dbReference>
<dbReference type="Gene3D" id="3.30.110.10">
    <property type="entry name" value="Translation initiation factor 3 (IF-3), C-terminal domain"/>
    <property type="match status" value="1"/>
</dbReference>
<dbReference type="Gene3D" id="3.10.20.80">
    <property type="entry name" value="Translation initiation factor 3 (IF-3), N-terminal domain"/>
    <property type="match status" value="1"/>
</dbReference>
<dbReference type="HAMAP" id="MF_00080">
    <property type="entry name" value="IF_3"/>
    <property type="match status" value="1"/>
</dbReference>
<dbReference type="InterPro" id="IPR036788">
    <property type="entry name" value="T_IF-3_C_sf"/>
</dbReference>
<dbReference type="InterPro" id="IPR036787">
    <property type="entry name" value="T_IF-3_N_sf"/>
</dbReference>
<dbReference type="InterPro" id="IPR019813">
    <property type="entry name" value="Translation_initiation_fac3_CS"/>
</dbReference>
<dbReference type="InterPro" id="IPR001288">
    <property type="entry name" value="Translation_initiation_fac_3"/>
</dbReference>
<dbReference type="InterPro" id="IPR019815">
    <property type="entry name" value="Translation_initiation_fac_3_C"/>
</dbReference>
<dbReference type="InterPro" id="IPR019814">
    <property type="entry name" value="Translation_initiation_fac_3_N"/>
</dbReference>
<dbReference type="NCBIfam" id="TIGR00168">
    <property type="entry name" value="infC"/>
    <property type="match status" value="1"/>
</dbReference>
<dbReference type="PANTHER" id="PTHR10938">
    <property type="entry name" value="TRANSLATION INITIATION FACTOR IF-3"/>
    <property type="match status" value="1"/>
</dbReference>
<dbReference type="PANTHER" id="PTHR10938:SF0">
    <property type="entry name" value="TRANSLATION INITIATION FACTOR IF-3, MITOCHONDRIAL"/>
    <property type="match status" value="1"/>
</dbReference>
<dbReference type="Pfam" id="PF00707">
    <property type="entry name" value="IF3_C"/>
    <property type="match status" value="1"/>
</dbReference>
<dbReference type="Pfam" id="PF05198">
    <property type="entry name" value="IF3_N"/>
    <property type="match status" value="1"/>
</dbReference>
<dbReference type="SUPFAM" id="SSF55200">
    <property type="entry name" value="Translation initiation factor IF3, C-terminal domain"/>
    <property type="match status" value="1"/>
</dbReference>
<dbReference type="SUPFAM" id="SSF54364">
    <property type="entry name" value="Translation initiation factor IF3, N-terminal domain"/>
    <property type="match status" value="1"/>
</dbReference>
<dbReference type="PROSITE" id="PS00938">
    <property type="entry name" value="IF3"/>
    <property type="match status" value="1"/>
</dbReference>
<gene>
    <name evidence="1" type="primary">infC</name>
    <name type="ordered locus">WIGBR0820</name>
</gene>
<evidence type="ECO:0000255" key="1">
    <source>
        <dbReference type="HAMAP-Rule" id="MF_00080"/>
    </source>
</evidence>
<keyword id="KW-0963">Cytoplasm</keyword>
<keyword id="KW-0396">Initiation factor</keyword>
<keyword id="KW-0648">Protein biosynthesis</keyword>
<keyword id="KW-1185">Reference proteome</keyword>
<feature type="chain" id="PRO_0000177605" description="Translation initiation factor IF-3">
    <location>
        <begin position="1"/>
        <end position="196"/>
    </location>
</feature>
<name>IF3_WIGBR</name>
<reference key="1">
    <citation type="journal article" date="2002" name="Nat. Genet.">
        <title>Genome sequence of the endocellular obligate symbiont of tsetse flies, Wigglesworthia glossinidia.</title>
        <authorList>
            <person name="Akman L."/>
            <person name="Yamashita A."/>
            <person name="Watanabe H."/>
            <person name="Oshima K."/>
            <person name="Shiba T."/>
            <person name="Hattori M."/>
            <person name="Aksoy S."/>
        </authorList>
    </citation>
    <scope>NUCLEOTIDE SEQUENCE [LARGE SCALE GENOMIC DNA]</scope>
</reference>
<organism>
    <name type="scientific">Wigglesworthia glossinidia brevipalpis</name>
    <dbReference type="NCBI Taxonomy" id="36870"/>
    <lineage>
        <taxon>Bacteria</taxon>
        <taxon>Pseudomonadati</taxon>
        <taxon>Pseudomonadota</taxon>
        <taxon>Gammaproteobacteria</taxon>
        <taxon>Enterobacterales</taxon>
        <taxon>Erwiniaceae</taxon>
        <taxon>Wigglesworthia</taxon>
    </lineage>
</organism>
<sequence length="196" mass="22878">MLYTKKLNKKKLNTKEINIKTGKKFYSIRLHKINEEIKAKTVRLTGINGVQLGIVPIKEAIFKSLELEMDLVEISPNSNPPVCKIMNYGKFLYEKNKSNKEQKRKQKIINTKEIKFRPNTDTGDYKVKLRNLTRFLENGKKVKISLRFRGREMVHKKIGINMLNRICSDLKEISSIESFPNKIEGRQMTLILVPKK</sequence>
<proteinExistence type="inferred from homology"/>
<protein>
    <recommendedName>
        <fullName evidence="1">Translation initiation factor IF-3</fullName>
    </recommendedName>
</protein>
<comment type="function">
    <text evidence="1">IF-3 binds to the 30S ribosomal subunit and shifts the equilibrium between 70S ribosomes and their 50S and 30S subunits in favor of the free subunits, thus enhancing the availability of 30S subunits on which protein synthesis initiation begins.</text>
</comment>
<comment type="subunit">
    <text evidence="1">Monomer.</text>
</comment>
<comment type="subcellular location">
    <subcellularLocation>
        <location evidence="1">Cytoplasm</location>
    </subcellularLocation>
</comment>
<comment type="similarity">
    <text evidence="1">Belongs to the IF-3 family.</text>
</comment>